<comment type="function">
    <text evidence="5">Probable transcription factor that may function in the maintenance of the proper function of the central cell in pollen tube attraction.</text>
</comment>
<comment type="subunit">
    <text evidence="3">Interacts with MEE14/CBP1.</text>
</comment>
<comment type="subcellular location">
    <subcellularLocation>
        <location evidence="1">Nucleus</location>
    </subcellularLocation>
</comment>
<comment type="sequence caution" evidence="4">
    <conflict type="erroneous gene model prediction">
        <sequence resource="EMBL-CDS" id="AAD48935"/>
    </conflict>
</comment>
<name>AGL53_ARATH</name>
<sequence>MDSSMSTKKKTKLSVRNQTCFKKSSLSSSSTAKKTTNLSMREQTMFKKALELSTLCNIDVCVIYYGRDGKLIKTWPEDQSKVRDMAERFSRLHERERCKKRTNLSLFLRKKILDDTKLSEKVLEMEDSLESGLRVLQDKLLLLQPEKNQTEFGQTRAVSSTTNPLSPPPSLIEDHRHQQWTEPLMSGVSNTEQDLSTSSLSQNQSRISVFLYNHDNRSFYQVPDSVSSFDQSALLGEQGSGLGSNFDLPPMVFPPQMQTQTPLVPFDQFAAWNQAPSFADPMMFPYN</sequence>
<proteinExistence type="evidence at protein level"/>
<accession>Q7X9N2</accession>
<accession>Q9S9U4</accession>
<organism>
    <name type="scientific">Arabidopsis thaliana</name>
    <name type="common">Mouse-ear cress</name>
    <dbReference type="NCBI Taxonomy" id="3702"/>
    <lineage>
        <taxon>Eukaryota</taxon>
        <taxon>Viridiplantae</taxon>
        <taxon>Streptophyta</taxon>
        <taxon>Embryophyta</taxon>
        <taxon>Tracheophyta</taxon>
        <taxon>Spermatophyta</taxon>
        <taxon>Magnoliopsida</taxon>
        <taxon>eudicotyledons</taxon>
        <taxon>Gunneridae</taxon>
        <taxon>Pentapetalae</taxon>
        <taxon>rosids</taxon>
        <taxon>malvids</taxon>
        <taxon>Brassicales</taxon>
        <taxon>Brassicaceae</taxon>
        <taxon>Camelineae</taxon>
        <taxon>Arabidopsis</taxon>
    </lineage>
</organism>
<protein>
    <recommendedName>
        <fullName evidence="4">Agamous-like MADS-box protein AGL53</fullName>
    </recommendedName>
</protein>
<gene>
    <name evidence="4" type="primary">AGL53</name>
    <name evidence="6" type="ordered locus">At5g27070</name>
    <name evidence="7" type="ORF">F15P11.2</name>
</gene>
<feature type="chain" id="PRO_0000435413" description="Agamous-like MADS-box protein AGL53">
    <location>
        <begin position="1"/>
        <end position="287"/>
    </location>
</feature>
<feature type="domain" description="MADS-box" evidence="1">
    <location>
        <begin position="30"/>
        <end position="78"/>
    </location>
</feature>
<feature type="region of interest" description="Disordered" evidence="2">
    <location>
        <begin position="151"/>
        <end position="171"/>
    </location>
</feature>
<keyword id="KW-0238">DNA-binding</keyword>
<keyword id="KW-0539">Nucleus</keyword>
<keyword id="KW-1185">Reference proteome</keyword>
<keyword id="KW-0804">Transcription</keyword>
<keyword id="KW-0805">Transcription regulation</keyword>
<reference key="1">
    <citation type="journal article" date="2003" name="Plant Cell">
        <title>Molecular and phylogenetic analyses of the complete MADS-box transcription factor family in Arabidopsis: new openings to the MADS world.</title>
        <authorList>
            <person name="Parenicova L."/>
            <person name="de Folter S."/>
            <person name="Kieffer M."/>
            <person name="Horner D.S."/>
            <person name="Favalli C."/>
            <person name="Busscher J."/>
            <person name="Cook H.E."/>
            <person name="Ingram R.M."/>
            <person name="Kater M.M."/>
            <person name="Davies B."/>
            <person name="Angenent G.C."/>
            <person name="Colombo L."/>
        </authorList>
    </citation>
    <scope>NUCLEOTIDE SEQUENCE [MRNA]</scope>
    <source>
        <strain>cv. Columbia</strain>
        <tissue evidence="8">Flower</tissue>
    </source>
</reference>
<reference key="2">
    <citation type="journal article" date="2000" name="Nature">
        <title>Sequence and analysis of chromosome 5 of the plant Arabidopsis thaliana.</title>
        <authorList>
            <person name="Tabata S."/>
            <person name="Kaneko T."/>
            <person name="Nakamura Y."/>
            <person name="Kotani H."/>
            <person name="Kato T."/>
            <person name="Asamizu E."/>
            <person name="Miyajima N."/>
            <person name="Sasamoto S."/>
            <person name="Kimura T."/>
            <person name="Hosouchi T."/>
            <person name="Kawashima K."/>
            <person name="Kohara M."/>
            <person name="Matsumoto M."/>
            <person name="Matsuno A."/>
            <person name="Muraki A."/>
            <person name="Nakayama S."/>
            <person name="Nakazaki N."/>
            <person name="Naruo K."/>
            <person name="Okumura S."/>
            <person name="Shinpo S."/>
            <person name="Takeuchi C."/>
            <person name="Wada T."/>
            <person name="Watanabe A."/>
            <person name="Yamada M."/>
            <person name="Yasuda M."/>
            <person name="Sato S."/>
            <person name="de la Bastide M."/>
            <person name="Huang E."/>
            <person name="Spiegel L."/>
            <person name="Gnoj L."/>
            <person name="O'Shaughnessy A."/>
            <person name="Preston R."/>
            <person name="Habermann K."/>
            <person name="Murray J."/>
            <person name="Johnson D."/>
            <person name="Rohlfing T."/>
            <person name="Nelson J."/>
            <person name="Stoneking T."/>
            <person name="Pepin K."/>
            <person name="Spieth J."/>
            <person name="Sekhon M."/>
            <person name="Armstrong J."/>
            <person name="Becker M."/>
            <person name="Belter E."/>
            <person name="Cordum H."/>
            <person name="Cordes M."/>
            <person name="Courtney L."/>
            <person name="Courtney W."/>
            <person name="Dante M."/>
            <person name="Du H."/>
            <person name="Edwards J."/>
            <person name="Fryman J."/>
            <person name="Haakensen B."/>
            <person name="Lamar E."/>
            <person name="Latreille P."/>
            <person name="Leonard S."/>
            <person name="Meyer R."/>
            <person name="Mulvaney E."/>
            <person name="Ozersky P."/>
            <person name="Riley A."/>
            <person name="Strowmatt C."/>
            <person name="Wagner-McPherson C."/>
            <person name="Wollam A."/>
            <person name="Yoakum M."/>
            <person name="Bell M."/>
            <person name="Dedhia N."/>
            <person name="Parnell L."/>
            <person name="Shah R."/>
            <person name="Rodriguez M."/>
            <person name="Hoon See L."/>
            <person name="Vil D."/>
            <person name="Baker J."/>
            <person name="Kirchoff K."/>
            <person name="Toth K."/>
            <person name="King L."/>
            <person name="Bahret A."/>
            <person name="Miller B."/>
            <person name="Marra M.A."/>
            <person name="Martienssen R."/>
            <person name="McCombie W.R."/>
            <person name="Wilson R.K."/>
            <person name="Murphy G."/>
            <person name="Bancroft I."/>
            <person name="Volckaert G."/>
            <person name="Wambutt R."/>
            <person name="Duesterhoeft A."/>
            <person name="Stiekema W."/>
            <person name="Pohl T."/>
            <person name="Entian K.-D."/>
            <person name="Terryn N."/>
            <person name="Hartley N."/>
            <person name="Bent E."/>
            <person name="Johnson S."/>
            <person name="Langham S.-A."/>
            <person name="McCullagh B."/>
            <person name="Robben J."/>
            <person name="Grymonprez B."/>
            <person name="Zimmermann W."/>
            <person name="Ramsperger U."/>
            <person name="Wedler H."/>
            <person name="Balke K."/>
            <person name="Wedler E."/>
            <person name="Peters S."/>
            <person name="van Staveren M."/>
            <person name="Dirkse W."/>
            <person name="Mooijman P."/>
            <person name="Klein Lankhorst R."/>
            <person name="Weitzenegger T."/>
            <person name="Bothe G."/>
            <person name="Rose M."/>
            <person name="Hauf J."/>
            <person name="Berneiser S."/>
            <person name="Hempel S."/>
            <person name="Feldpausch M."/>
            <person name="Lamberth S."/>
            <person name="Villarroel R."/>
            <person name="Gielen J."/>
            <person name="Ardiles W."/>
            <person name="Bents O."/>
            <person name="Lemcke K."/>
            <person name="Kolesov G."/>
            <person name="Mayer K.F.X."/>
            <person name="Rudd S."/>
            <person name="Schoof H."/>
            <person name="Schueller C."/>
            <person name="Zaccaria P."/>
            <person name="Mewes H.-W."/>
            <person name="Bevan M."/>
            <person name="Fransz P.F."/>
        </authorList>
    </citation>
    <scope>NUCLEOTIDE SEQUENCE [LARGE SCALE GENOMIC DNA]</scope>
    <source>
        <strain>cv. Columbia</strain>
    </source>
</reference>
<reference key="3">
    <citation type="journal article" date="2017" name="Plant J.">
        <title>Araport11: a complete reannotation of the Arabidopsis thaliana reference genome.</title>
        <authorList>
            <person name="Cheng C.Y."/>
            <person name="Krishnakumar V."/>
            <person name="Chan A.P."/>
            <person name="Thibaud-Nissen F."/>
            <person name="Schobel S."/>
            <person name="Town C.D."/>
        </authorList>
    </citation>
    <scope>GENOME REANNOTATION</scope>
    <source>
        <strain>cv. Columbia</strain>
    </source>
</reference>
<reference key="4">
    <citation type="journal article" date="2015" name="Plant Cell">
        <title>Arabidopsis CBP1 is a novel regulator of transcription initiation in central cell-mediated pollen tube guidance.</title>
        <authorList>
            <person name="Li H.J."/>
            <person name="Zhu S.S."/>
            <person name="Zhang M.X."/>
            <person name="Wang T."/>
            <person name="Liang L."/>
            <person name="Xue Y."/>
            <person name="Shi D.Q."/>
            <person name="Liu J."/>
            <person name="Yang W.C."/>
        </authorList>
    </citation>
    <scope>FUNCTION</scope>
    <scope>INTERACTION WITH ME14/CBP1</scope>
</reference>
<dbReference type="EMBL" id="AY141217">
    <property type="protein sequence ID" value="AAN52781.1"/>
    <property type="molecule type" value="mRNA"/>
</dbReference>
<dbReference type="EMBL" id="AF160760">
    <property type="protein sequence ID" value="AAD48935.1"/>
    <property type="status" value="ALT_SEQ"/>
    <property type="molecule type" value="Genomic_DNA"/>
</dbReference>
<dbReference type="EMBL" id="CP002688">
    <property type="protein sequence ID" value="AED93646.1"/>
    <property type="molecule type" value="Genomic_DNA"/>
</dbReference>
<dbReference type="RefSeq" id="NP_198059.1">
    <property type="nucleotide sequence ID" value="NM_122589.1"/>
</dbReference>
<dbReference type="SMR" id="Q7X9N2"/>
<dbReference type="FunCoup" id="Q7X9N2">
    <property type="interactions" value="26"/>
</dbReference>
<dbReference type="IntAct" id="Q7X9N2">
    <property type="interactions" value="14"/>
</dbReference>
<dbReference type="STRING" id="3702.Q7X9N2"/>
<dbReference type="PaxDb" id="3702-AT5G27070.1"/>
<dbReference type="ProteomicsDB" id="244689"/>
<dbReference type="EnsemblPlants" id="AT5G27070.1">
    <property type="protein sequence ID" value="AT5G27070.1"/>
    <property type="gene ID" value="AT5G27070"/>
</dbReference>
<dbReference type="GeneID" id="832765"/>
<dbReference type="Gramene" id="AT5G27070.1">
    <property type="protein sequence ID" value="AT5G27070.1"/>
    <property type="gene ID" value="AT5G27070"/>
</dbReference>
<dbReference type="KEGG" id="ath:AT5G27070"/>
<dbReference type="Araport" id="AT5G27070"/>
<dbReference type="TAIR" id="AT5G27070">
    <property type="gene designation" value="AGL53"/>
</dbReference>
<dbReference type="eggNOG" id="KOG0014">
    <property type="taxonomic scope" value="Eukaryota"/>
</dbReference>
<dbReference type="HOGENOM" id="CLU_089453_0_0_1"/>
<dbReference type="InParanoid" id="Q7X9N2"/>
<dbReference type="OMA" id="REDHHAE"/>
<dbReference type="PhylomeDB" id="Q7X9N2"/>
<dbReference type="PRO" id="PR:Q7X9N2"/>
<dbReference type="Proteomes" id="UP000006548">
    <property type="component" value="Chromosome 5"/>
</dbReference>
<dbReference type="ExpressionAtlas" id="Q7X9N2">
    <property type="expression patterns" value="baseline and differential"/>
</dbReference>
<dbReference type="GO" id="GO:0005634">
    <property type="term" value="C:nucleus"/>
    <property type="evidence" value="ECO:0007669"/>
    <property type="project" value="UniProtKB-SubCell"/>
</dbReference>
<dbReference type="GO" id="GO:0005886">
    <property type="term" value="C:plasma membrane"/>
    <property type="evidence" value="ECO:0007005"/>
    <property type="project" value="TAIR"/>
</dbReference>
<dbReference type="GO" id="GO:0000987">
    <property type="term" value="F:cis-regulatory region sequence-specific DNA binding"/>
    <property type="evidence" value="ECO:0007669"/>
    <property type="project" value="InterPro"/>
</dbReference>
<dbReference type="GO" id="GO:0003700">
    <property type="term" value="F:DNA-binding transcription factor activity"/>
    <property type="evidence" value="ECO:0000250"/>
    <property type="project" value="TAIR"/>
</dbReference>
<dbReference type="GO" id="GO:0000981">
    <property type="term" value="F:DNA-binding transcription factor activity, RNA polymerase II-specific"/>
    <property type="evidence" value="ECO:0007669"/>
    <property type="project" value="InterPro"/>
</dbReference>
<dbReference type="GO" id="GO:0046983">
    <property type="term" value="F:protein dimerization activity"/>
    <property type="evidence" value="ECO:0007669"/>
    <property type="project" value="InterPro"/>
</dbReference>
<dbReference type="GO" id="GO:0045944">
    <property type="term" value="P:positive regulation of transcription by RNA polymerase II"/>
    <property type="evidence" value="ECO:0007669"/>
    <property type="project" value="InterPro"/>
</dbReference>
<dbReference type="CDD" id="cd00266">
    <property type="entry name" value="MADS_SRF_like"/>
    <property type="match status" value="1"/>
</dbReference>
<dbReference type="FunFam" id="3.40.1810.10:FF:000033">
    <property type="entry name" value="Agamous-like MADS-box protein AGL53"/>
    <property type="match status" value="1"/>
</dbReference>
<dbReference type="Gene3D" id="3.40.1810.10">
    <property type="entry name" value="Transcription factor, MADS-box"/>
    <property type="match status" value="1"/>
</dbReference>
<dbReference type="InterPro" id="IPR033897">
    <property type="entry name" value="SRF-like_MADS-box"/>
</dbReference>
<dbReference type="InterPro" id="IPR002100">
    <property type="entry name" value="TF_MADSbox"/>
</dbReference>
<dbReference type="InterPro" id="IPR036879">
    <property type="entry name" value="TF_MADSbox_sf"/>
</dbReference>
<dbReference type="Pfam" id="PF00319">
    <property type="entry name" value="SRF-TF"/>
    <property type="match status" value="1"/>
</dbReference>
<dbReference type="SMART" id="SM00432">
    <property type="entry name" value="MADS"/>
    <property type="match status" value="1"/>
</dbReference>
<dbReference type="SUPFAM" id="SSF55455">
    <property type="entry name" value="SRF-like"/>
    <property type="match status" value="1"/>
</dbReference>
<dbReference type="PROSITE" id="PS50066">
    <property type="entry name" value="MADS_BOX_2"/>
    <property type="match status" value="1"/>
</dbReference>
<evidence type="ECO:0000255" key="1">
    <source>
        <dbReference type="PROSITE-ProRule" id="PRU00251"/>
    </source>
</evidence>
<evidence type="ECO:0000256" key="2">
    <source>
        <dbReference type="SAM" id="MobiDB-lite"/>
    </source>
</evidence>
<evidence type="ECO:0000269" key="3">
    <source>
    </source>
</evidence>
<evidence type="ECO:0000305" key="4"/>
<evidence type="ECO:0000305" key="5">
    <source>
    </source>
</evidence>
<evidence type="ECO:0000312" key="6">
    <source>
        <dbReference type="Araport" id="AT5G27070"/>
    </source>
</evidence>
<evidence type="ECO:0000312" key="7">
    <source>
        <dbReference type="EMBL" id="AAD48935.1"/>
    </source>
</evidence>
<evidence type="ECO:0000312" key="8">
    <source>
        <dbReference type="EMBL" id="AAN52781.1"/>
    </source>
</evidence>